<dbReference type="EC" id="1.3.1.98" evidence="1"/>
<dbReference type="EMBL" id="FM242711">
    <property type="protein sequence ID" value="CAS05192.1"/>
    <property type="molecule type" value="Genomic_DNA"/>
</dbReference>
<dbReference type="RefSeq" id="WP_003725365.1">
    <property type="nucleotide sequence ID" value="NC_012488.1"/>
</dbReference>
<dbReference type="SMR" id="C1L2X6"/>
<dbReference type="KEGG" id="lmc:Lm4b_01429"/>
<dbReference type="HOGENOM" id="CLU_035304_1_1_9"/>
<dbReference type="UniPathway" id="UPA00219"/>
<dbReference type="GO" id="GO:0005829">
    <property type="term" value="C:cytosol"/>
    <property type="evidence" value="ECO:0007669"/>
    <property type="project" value="TreeGrafter"/>
</dbReference>
<dbReference type="GO" id="GO:0071949">
    <property type="term" value="F:FAD binding"/>
    <property type="evidence" value="ECO:0007669"/>
    <property type="project" value="InterPro"/>
</dbReference>
<dbReference type="GO" id="GO:0008762">
    <property type="term" value="F:UDP-N-acetylmuramate dehydrogenase activity"/>
    <property type="evidence" value="ECO:0007669"/>
    <property type="project" value="UniProtKB-UniRule"/>
</dbReference>
<dbReference type="GO" id="GO:0051301">
    <property type="term" value="P:cell division"/>
    <property type="evidence" value="ECO:0007669"/>
    <property type="project" value="UniProtKB-KW"/>
</dbReference>
<dbReference type="GO" id="GO:0071555">
    <property type="term" value="P:cell wall organization"/>
    <property type="evidence" value="ECO:0007669"/>
    <property type="project" value="UniProtKB-KW"/>
</dbReference>
<dbReference type="GO" id="GO:0009252">
    <property type="term" value="P:peptidoglycan biosynthetic process"/>
    <property type="evidence" value="ECO:0007669"/>
    <property type="project" value="UniProtKB-UniRule"/>
</dbReference>
<dbReference type="GO" id="GO:0008360">
    <property type="term" value="P:regulation of cell shape"/>
    <property type="evidence" value="ECO:0007669"/>
    <property type="project" value="UniProtKB-KW"/>
</dbReference>
<dbReference type="FunFam" id="3.90.78.10:FF:000001">
    <property type="entry name" value="UDP-N-acetylenolpyruvoylglucosamine reductase"/>
    <property type="match status" value="1"/>
</dbReference>
<dbReference type="Gene3D" id="3.30.465.10">
    <property type="match status" value="1"/>
</dbReference>
<dbReference type="Gene3D" id="3.90.78.10">
    <property type="entry name" value="UDP-N-acetylenolpyruvoylglucosamine reductase, C-terminal domain"/>
    <property type="match status" value="1"/>
</dbReference>
<dbReference type="Gene3D" id="3.30.43.10">
    <property type="entry name" value="Uridine Diphospho-n-acetylenolpyruvylglucosamine Reductase, domain 2"/>
    <property type="match status" value="1"/>
</dbReference>
<dbReference type="HAMAP" id="MF_00037">
    <property type="entry name" value="MurB"/>
    <property type="match status" value="1"/>
</dbReference>
<dbReference type="InterPro" id="IPR016166">
    <property type="entry name" value="FAD-bd_PCMH"/>
</dbReference>
<dbReference type="InterPro" id="IPR036318">
    <property type="entry name" value="FAD-bd_PCMH-like_sf"/>
</dbReference>
<dbReference type="InterPro" id="IPR016167">
    <property type="entry name" value="FAD-bd_PCMH_sub1"/>
</dbReference>
<dbReference type="InterPro" id="IPR016169">
    <property type="entry name" value="FAD-bd_PCMH_sub2"/>
</dbReference>
<dbReference type="InterPro" id="IPR003170">
    <property type="entry name" value="MurB"/>
</dbReference>
<dbReference type="InterPro" id="IPR011601">
    <property type="entry name" value="MurB_C"/>
</dbReference>
<dbReference type="InterPro" id="IPR036635">
    <property type="entry name" value="MurB_C_sf"/>
</dbReference>
<dbReference type="InterPro" id="IPR006094">
    <property type="entry name" value="Oxid_FAD_bind_N"/>
</dbReference>
<dbReference type="NCBIfam" id="TIGR00179">
    <property type="entry name" value="murB"/>
    <property type="match status" value="1"/>
</dbReference>
<dbReference type="NCBIfam" id="NF010480">
    <property type="entry name" value="PRK13905.1"/>
    <property type="match status" value="1"/>
</dbReference>
<dbReference type="PANTHER" id="PTHR21071">
    <property type="entry name" value="UDP-N-ACETYLENOLPYRUVOYLGLUCOSAMINE REDUCTASE"/>
    <property type="match status" value="1"/>
</dbReference>
<dbReference type="PANTHER" id="PTHR21071:SF4">
    <property type="entry name" value="UDP-N-ACETYLENOLPYRUVOYLGLUCOSAMINE REDUCTASE"/>
    <property type="match status" value="1"/>
</dbReference>
<dbReference type="Pfam" id="PF01565">
    <property type="entry name" value="FAD_binding_4"/>
    <property type="match status" value="1"/>
</dbReference>
<dbReference type="Pfam" id="PF02873">
    <property type="entry name" value="MurB_C"/>
    <property type="match status" value="1"/>
</dbReference>
<dbReference type="SUPFAM" id="SSF56176">
    <property type="entry name" value="FAD-binding/transporter-associated domain-like"/>
    <property type="match status" value="1"/>
</dbReference>
<dbReference type="SUPFAM" id="SSF56194">
    <property type="entry name" value="Uridine diphospho-N-Acetylenolpyruvylglucosamine reductase, MurB, C-terminal domain"/>
    <property type="match status" value="1"/>
</dbReference>
<dbReference type="PROSITE" id="PS51387">
    <property type="entry name" value="FAD_PCMH"/>
    <property type="match status" value="1"/>
</dbReference>
<name>MURB_LISMC</name>
<proteinExistence type="inferred from homology"/>
<evidence type="ECO:0000255" key="1">
    <source>
        <dbReference type="HAMAP-Rule" id="MF_00037"/>
    </source>
</evidence>
<gene>
    <name evidence="1" type="primary">murB</name>
    <name type="ordered locus">Lm4b_01429</name>
</gene>
<protein>
    <recommendedName>
        <fullName evidence="1">UDP-N-acetylenolpyruvoylglucosamine reductase</fullName>
        <ecNumber evidence="1">1.3.1.98</ecNumber>
    </recommendedName>
    <alternativeName>
        <fullName evidence="1">UDP-N-acetylmuramate dehydrogenase</fullName>
    </alternativeName>
</protein>
<feature type="chain" id="PRO_1000202054" description="UDP-N-acetylenolpyruvoylglucosamine reductase">
    <location>
        <begin position="1"/>
        <end position="298"/>
    </location>
</feature>
<feature type="domain" description="FAD-binding PCMH-type" evidence="1">
    <location>
        <begin position="26"/>
        <end position="191"/>
    </location>
</feature>
<feature type="active site" evidence="1">
    <location>
        <position position="170"/>
    </location>
</feature>
<feature type="active site" description="Proton donor" evidence="1">
    <location>
        <position position="220"/>
    </location>
</feature>
<feature type="active site" evidence="1">
    <location>
        <position position="290"/>
    </location>
</feature>
<reference key="1">
    <citation type="journal article" date="2012" name="BMC Genomics">
        <title>Comparative genomics and transcriptomics of lineages I, II, and III strains of Listeria monocytogenes.</title>
        <authorList>
            <person name="Hain T."/>
            <person name="Ghai R."/>
            <person name="Billion A."/>
            <person name="Kuenne C.T."/>
            <person name="Steinweg C."/>
            <person name="Izar B."/>
            <person name="Mohamed W."/>
            <person name="Mraheil M."/>
            <person name="Domann E."/>
            <person name="Schaffrath S."/>
            <person name="Karst U."/>
            <person name="Goesmann A."/>
            <person name="Oehm S."/>
            <person name="Puhler A."/>
            <person name="Merkl R."/>
            <person name="Vorwerk S."/>
            <person name="Glaser P."/>
            <person name="Garrido P."/>
            <person name="Rusniok C."/>
            <person name="Buchrieser C."/>
            <person name="Goebel W."/>
            <person name="Chakraborty T."/>
        </authorList>
    </citation>
    <scope>NUCLEOTIDE SEQUENCE [LARGE SCALE GENOMIC DNA]</scope>
    <source>
        <strain>CLIP80459</strain>
    </source>
</reference>
<accession>C1L2X6</accession>
<organism>
    <name type="scientific">Listeria monocytogenes serotype 4b (strain CLIP80459)</name>
    <dbReference type="NCBI Taxonomy" id="568819"/>
    <lineage>
        <taxon>Bacteria</taxon>
        <taxon>Bacillati</taxon>
        <taxon>Bacillota</taxon>
        <taxon>Bacilli</taxon>
        <taxon>Bacillales</taxon>
        <taxon>Listeriaceae</taxon>
        <taxon>Listeria</taxon>
    </lineage>
</organism>
<comment type="function">
    <text evidence="1">Cell wall formation.</text>
</comment>
<comment type="catalytic activity">
    <reaction evidence="1">
        <text>UDP-N-acetyl-alpha-D-muramate + NADP(+) = UDP-N-acetyl-3-O-(1-carboxyvinyl)-alpha-D-glucosamine + NADPH + H(+)</text>
        <dbReference type="Rhea" id="RHEA:12248"/>
        <dbReference type="ChEBI" id="CHEBI:15378"/>
        <dbReference type="ChEBI" id="CHEBI:57783"/>
        <dbReference type="ChEBI" id="CHEBI:58349"/>
        <dbReference type="ChEBI" id="CHEBI:68483"/>
        <dbReference type="ChEBI" id="CHEBI:70757"/>
        <dbReference type="EC" id="1.3.1.98"/>
    </reaction>
</comment>
<comment type="cofactor">
    <cofactor evidence="1">
        <name>FAD</name>
        <dbReference type="ChEBI" id="CHEBI:57692"/>
    </cofactor>
</comment>
<comment type="pathway">
    <text evidence="1">Cell wall biogenesis; peptidoglycan biosynthesis.</text>
</comment>
<comment type="subcellular location">
    <subcellularLocation>
        <location evidence="1">Cytoplasm</location>
    </subcellularLocation>
</comment>
<comment type="similarity">
    <text evidence="1">Belongs to the MurB family.</text>
</comment>
<keyword id="KW-0131">Cell cycle</keyword>
<keyword id="KW-0132">Cell division</keyword>
<keyword id="KW-0133">Cell shape</keyword>
<keyword id="KW-0961">Cell wall biogenesis/degradation</keyword>
<keyword id="KW-0963">Cytoplasm</keyword>
<keyword id="KW-0274">FAD</keyword>
<keyword id="KW-0285">Flavoprotein</keyword>
<keyword id="KW-0521">NADP</keyword>
<keyword id="KW-0560">Oxidoreductase</keyword>
<keyword id="KW-0573">Peptidoglycan synthesis</keyword>
<sequence>MNNLQTQFPHIAIKLNEPLSKYTYTKTGGAADVFVMPKTIEETQEVVAYCHQNKIPLTILGNGSNLIIKDGGIRGVILHLDLLQTIERNNTQIIAMSGAKLIDTAKFALDESLSGLEFACGIPGSIGGALHMNAGAYGGEISDVLEAATVLTQTGELKKLKRSELKAAYRFSTIAEKNYIVLDATFSLALEEKNLIQAKMDELTAAREAKQPLEYPSCGSVFKRPPGHFAGKLIQDSGLQGHIIGGAQVSLKHAGFIVNIGGATATDYMNLIAYVQQTVREKFDVELETEVKIIGEDK</sequence>